<dbReference type="EC" id="1.1.1.-" evidence="7"/>
<dbReference type="EC" id="1.1.1.30" evidence="4"/>
<dbReference type="EC" id="1.1.1.104" evidence="2 4"/>
<dbReference type="EMBL" id="CR388005">
    <property type="protein sequence ID" value="CAX13852.1"/>
    <property type="molecule type" value="Genomic_DNA"/>
</dbReference>
<dbReference type="EMBL" id="CR388005">
    <property type="protein sequence ID" value="CAX13853.1"/>
    <property type="status" value="ALT_SEQ"/>
    <property type="molecule type" value="Genomic_DNA"/>
</dbReference>
<dbReference type="EMBL" id="BC092874">
    <property type="protein sequence ID" value="AAH92874.1"/>
    <property type="molecule type" value="mRNA"/>
</dbReference>
<dbReference type="RefSeq" id="NP_001017809.1">
    <property type="nucleotide sequence ID" value="NM_001017809.1"/>
</dbReference>
<dbReference type="RefSeq" id="XP_005160124.1">
    <property type="nucleotide sequence ID" value="XM_005160067.5"/>
</dbReference>
<dbReference type="RefSeq" id="XP_005160125.1">
    <property type="nucleotide sequence ID" value="XM_005160068.5"/>
</dbReference>
<dbReference type="SMR" id="Q561X9"/>
<dbReference type="FunCoup" id="Q561X9">
    <property type="interactions" value="127"/>
</dbReference>
<dbReference type="STRING" id="7955.ENSDARP00000069085"/>
<dbReference type="PaxDb" id="7955-ENSDARP00000069085"/>
<dbReference type="Ensembl" id="ENSDART00000074597">
    <property type="protein sequence ID" value="ENSDARP00000069085"/>
    <property type="gene ID" value="ENSDARG00000052696"/>
</dbReference>
<dbReference type="Ensembl" id="ENSDART00000132542">
    <property type="protein sequence ID" value="ENSDARP00000119021"/>
    <property type="gene ID" value="ENSDARG00000052696"/>
</dbReference>
<dbReference type="Ensembl" id="ENSDART00000181064">
    <property type="protein sequence ID" value="ENSDARP00000146933"/>
    <property type="gene ID" value="ENSDARG00000052696"/>
</dbReference>
<dbReference type="GeneID" id="550507"/>
<dbReference type="KEGG" id="dre:550507"/>
<dbReference type="AGR" id="ZFIN:ZDB-GENE-050417-343"/>
<dbReference type="CTD" id="56898"/>
<dbReference type="ZFIN" id="ZDB-GENE-050417-343">
    <property type="gene designation" value="bdh2"/>
</dbReference>
<dbReference type="eggNOG" id="KOG0725">
    <property type="taxonomic scope" value="Eukaryota"/>
</dbReference>
<dbReference type="HOGENOM" id="CLU_010194_1_0_1"/>
<dbReference type="InParanoid" id="Q561X9"/>
<dbReference type="OrthoDB" id="47007at2759"/>
<dbReference type="PhylomeDB" id="Q561X9"/>
<dbReference type="TreeFam" id="TF328795"/>
<dbReference type="BRENDA" id="1.1.1.30">
    <property type="organism ID" value="928"/>
</dbReference>
<dbReference type="Reactome" id="R-DRE-77111">
    <property type="pathway name" value="Synthesis of Ketone Bodies"/>
</dbReference>
<dbReference type="PRO" id="PR:Q561X9"/>
<dbReference type="Proteomes" id="UP000000437">
    <property type="component" value="Chromosome 1"/>
</dbReference>
<dbReference type="Bgee" id="ENSDARG00000052696">
    <property type="expression patterns" value="Expressed in head kidney and 21 other cell types or tissues"/>
</dbReference>
<dbReference type="GO" id="GO:0005737">
    <property type="term" value="C:cytoplasm"/>
    <property type="evidence" value="ECO:0000318"/>
    <property type="project" value="GO_Central"/>
</dbReference>
<dbReference type="GO" id="GO:0003858">
    <property type="term" value="F:3-hydroxybutyrate dehydrogenase activity"/>
    <property type="evidence" value="ECO:0000318"/>
    <property type="project" value="GO_Central"/>
</dbReference>
<dbReference type="GO" id="GO:0016617">
    <property type="term" value="F:4-oxoproline reductase activity"/>
    <property type="evidence" value="ECO:0007669"/>
    <property type="project" value="RHEA"/>
</dbReference>
<dbReference type="GO" id="GO:0016628">
    <property type="term" value="F:oxidoreductase activity, acting on the CH-CH group of donors, NAD or NADP as acceptor"/>
    <property type="evidence" value="ECO:0000250"/>
    <property type="project" value="UniProtKB"/>
</dbReference>
<dbReference type="GO" id="GO:0043249">
    <property type="term" value="P:erythrocyte maturation"/>
    <property type="evidence" value="ECO:0000315"/>
    <property type="project" value="ZFIN"/>
</dbReference>
<dbReference type="GO" id="GO:0042168">
    <property type="term" value="P:heme metabolic process"/>
    <property type="evidence" value="ECO:0000315"/>
    <property type="project" value="UniProtKB"/>
</dbReference>
<dbReference type="GO" id="GO:0042541">
    <property type="term" value="P:hemoglobin biosynthetic process"/>
    <property type="evidence" value="ECO:0000315"/>
    <property type="project" value="ZFIN"/>
</dbReference>
<dbReference type="GO" id="GO:0006629">
    <property type="term" value="P:lipid metabolic process"/>
    <property type="evidence" value="ECO:0007669"/>
    <property type="project" value="UniProtKB-KW"/>
</dbReference>
<dbReference type="GO" id="GO:0019290">
    <property type="term" value="P:siderophore biosynthetic process"/>
    <property type="evidence" value="ECO:0000250"/>
    <property type="project" value="UniProtKB"/>
</dbReference>
<dbReference type="CDD" id="cd05368">
    <property type="entry name" value="DHRS6_like_SDR_c"/>
    <property type="match status" value="1"/>
</dbReference>
<dbReference type="FunFam" id="3.40.50.720:FF:000211">
    <property type="entry name" value="3-hydroxybutyrate dehydrogenase type 2"/>
    <property type="match status" value="1"/>
</dbReference>
<dbReference type="Gene3D" id="3.40.50.720">
    <property type="entry name" value="NAD(P)-binding Rossmann-like Domain"/>
    <property type="match status" value="1"/>
</dbReference>
<dbReference type="InterPro" id="IPR036291">
    <property type="entry name" value="NAD(P)-bd_dom_sf"/>
</dbReference>
<dbReference type="InterPro" id="IPR020904">
    <property type="entry name" value="Sc_DH/Rdtase_CS"/>
</dbReference>
<dbReference type="InterPro" id="IPR002347">
    <property type="entry name" value="SDR_fam"/>
</dbReference>
<dbReference type="InterPro" id="IPR051122">
    <property type="entry name" value="SDR_superfamily_enzyme"/>
</dbReference>
<dbReference type="PANTHER" id="PTHR43477:SF4">
    <property type="entry name" value="DEHYDROGENASE_REDUCTASE SDR FAMILY MEMBER 6"/>
    <property type="match status" value="1"/>
</dbReference>
<dbReference type="PANTHER" id="PTHR43477">
    <property type="entry name" value="DIHYDROANTICAPSIN 7-DEHYDROGENASE"/>
    <property type="match status" value="1"/>
</dbReference>
<dbReference type="Pfam" id="PF13561">
    <property type="entry name" value="adh_short_C2"/>
    <property type="match status" value="1"/>
</dbReference>
<dbReference type="PRINTS" id="PR00081">
    <property type="entry name" value="GDHRDH"/>
</dbReference>
<dbReference type="PRINTS" id="PR00080">
    <property type="entry name" value="SDRFAMILY"/>
</dbReference>
<dbReference type="SUPFAM" id="SSF51735">
    <property type="entry name" value="NAD(P)-binding Rossmann-fold domains"/>
    <property type="match status" value="1"/>
</dbReference>
<dbReference type="PROSITE" id="PS00061">
    <property type="entry name" value="ADH_SHORT"/>
    <property type="match status" value="1"/>
</dbReference>
<sequence length="245" mass="26502">MGRLDGKVIVLSAAAQGIGKASAIAFAKEGAQVTATDINGEKLKELDGIPGIKTKVVDVTKKDQVDALAKDFDHVDVLFNIAGFVHHGSILDCEESDWDFTMNVNVRSMYLMIKAFLPKMLARKSGNIINMASVASSIKGVVNRCVYSTSKAAVIGLTKSVAADFLEQGIRCNCICPGTVDTPSLRERIQARPDPEQAFKDFMARQRTGRLCTAEEVAHLCVYLASDESTFVTGTEVIIDGGWRL</sequence>
<comment type="function">
    <text evidence="2 3 4">NAD(H)-dependent dehydrogenase/reductase with a preference for cyclic substrates (By similarity). Catalyzes stereoselective conversion of 4-oxo-L-proline to cis-4-hydroxy-L-proline, likely a detoxification mechanism for ketoprolines (By similarity). Mediates the formation of 2,5-dihydroxybenzoate (2,5-DHBA), a siderophore that chelates free cytoplasmic iron, thereby regulating iron transport and homeostasis while protecting cells against free radical-induced oxidative stress. The iron-siderophore complex is imported into mitochondria, providing an iron source for mitochondrial metabolic processes in particular heme synthesis (By similarity). May act as a 3-hydroxybutyrate dehydrogenase (By similarity).</text>
</comment>
<comment type="catalytic activity">
    <reaction evidence="2 4">
        <text>cis-4-hydroxy-L-proline + NAD(+) = 4-oxo-L-proline + NADH + H(+)</text>
        <dbReference type="Rhea" id="RHEA:13601"/>
        <dbReference type="ChEBI" id="CHEBI:15378"/>
        <dbReference type="ChEBI" id="CHEBI:57540"/>
        <dbReference type="ChEBI" id="CHEBI:57945"/>
        <dbReference type="ChEBI" id="CHEBI:63727"/>
        <dbReference type="ChEBI" id="CHEBI:84813"/>
        <dbReference type="EC" id="1.1.1.104"/>
    </reaction>
    <physiologicalReaction direction="right-to-left" evidence="2 4">
        <dbReference type="Rhea" id="RHEA:13603"/>
    </physiologicalReaction>
</comment>
<comment type="catalytic activity">
    <reaction evidence="4">
        <text>(R)-3-hydroxybutanoate + NAD(+) = acetoacetate + NADH + H(+)</text>
        <dbReference type="Rhea" id="RHEA:20521"/>
        <dbReference type="ChEBI" id="CHEBI:10983"/>
        <dbReference type="ChEBI" id="CHEBI:13705"/>
        <dbReference type="ChEBI" id="CHEBI:15378"/>
        <dbReference type="ChEBI" id="CHEBI:57540"/>
        <dbReference type="ChEBI" id="CHEBI:57945"/>
        <dbReference type="EC" id="1.1.1.30"/>
    </reaction>
</comment>
<comment type="pathway">
    <text evidence="4">Amino-acid metabolism.</text>
</comment>
<comment type="pathway">
    <text evidence="3">Siderophore biosynthesis.</text>
</comment>
<comment type="subunit">
    <text evidence="4">Homotetramer.</text>
</comment>
<comment type="subcellular location">
    <subcellularLocation>
        <location evidence="4">Cytoplasm</location>
    </subcellularLocation>
</comment>
<comment type="developmental stage">
    <text evidence="6">Detected in embryos.</text>
</comment>
<comment type="disruption phenotype">
    <text evidence="6">Morpholino knockdown of the protein causes no gross defects in embryos, with the exception of hypochromic blood due to decreased hemoglobin levels.</text>
</comment>
<comment type="similarity">
    <text evidence="7">Belongs to the short-chain dehydrogenases/reductases (SDR) family.</text>
</comment>
<comment type="sequence caution" evidence="7">
    <conflict type="erroneous gene model prediction">
        <sequence resource="EMBL-CDS" id="CAX13853"/>
    </conflict>
</comment>
<feature type="chain" id="PRO_0000398629" description="Dehydrogenase/reductase SDR family member 6">
    <location>
        <begin position="1"/>
        <end position="245"/>
    </location>
</feature>
<feature type="active site" description="Proton acceptor" evidence="5">
    <location>
        <position position="147"/>
    </location>
</feature>
<feature type="binding site" evidence="4">
    <location>
        <begin position="16"/>
        <end position="18"/>
    </location>
    <ligand>
        <name>NAD(+)</name>
        <dbReference type="ChEBI" id="CHEBI:57540"/>
    </ligand>
</feature>
<feature type="binding site" evidence="4">
    <location>
        <position position="37"/>
    </location>
    <ligand>
        <name>NAD(+)</name>
        <dbReference type="ChEBI" id="CHEBI:57540"/>
    </ligand>
</feature>
<feature type="binding site" evidence="4">
    <location>
        <position position="58"/>
    </location>
    <ligand>
        <name>NAD(+)</name>
        <dbReference type="ChEBI" id="CHEBI:57540"/>
    </ligand>
</feature>
<feature type="binding site" evidence="1">
    <location>
        <position position="144"/>
    </location>
    <ligand>
        <name>substrate</name>
    </ligand>
</feature>
<feature type="binding site" evidence="4">
    <location>
        <position position="151"/>
    </location>
    <ligand>
        <name>NAD(+)</name>
        <dbReference type="ChEBI" id="CHEBI:57540"/>
    </ligand>
</feature>
<feature type="binding site" evidence="4">
    <location>
        <begin position="180"/>
        <end position="184"/>
    </location>
    <ligand>
        <name>NAD(+)</name>
        <dbReference type="ChEBI" id="CHEBI:57540"/>
    </ligand>
</feature>
<feature type="binding site" evidence="1">
    <location>
        <position position="188"/>
    </location>
    <ligand>
        <name>substrate</name>
    </ligand>
</feature>
<feature type="binding site" evidence="1">
    <location>
        <position position="205"/>
    </location>
    <ligand>
        <name>substrate</name>
    </ligand>
</feature>
<gene>
    <name type="primary">bdh2</name>
    <name type="ORF">si:dkey-162b23.2</name>
    <name type="ORF">zgc:110323</name>
</gene>
<accession>Q561X9</accession>
<accession>B8JI04</accession>
<keyword id="KW-0963">Cytoplasm</keyword>
<keyword id="KW-0443">Lipid metabolism</keyword>
<keyword id="KW-0520">NAD</keyword>
<keyword id="KW-0560">Oxidoreductase</keyword>
<keyword id="KW-1185">Reference proteome</keyword>
<proteinExistence type="evidence at transcript level"/>
<name>DHRS6_DANRE</name>
<evidence type="ECO:0000250" key="1"/>
<evidence type="ECO:0000250" key="2">
    <source>
        <dbReference type="UniProtKB" id="D4A1J4"/>
    </source>
</evidence>
<evidence type="ECO:0000250" key="3">
    <source>
        <dbReference type="UniProtKB" id="Q8JZV9"/>
    </source>
</evidence>
<evidence type="ECO:0000250" key="4">
    <source>
        <dbReference type="UniProtKB" id="Q9BUT1"/>
    </source>
</evidence>
<evidence type="ECO:0000255" key="5">
    <source>
        <dbReference type="PROSITE-ProRule" id="PRU10001"/>
    </source>
</evidence>
<evidence type="ECO:0000269" key="6">
    <source>
    </source>
</evidence>
<evidence type="ECO:0000305" key="7"/>
<reference key="1">
    <citation type="journal article" date="2013" name="Nature">
        <title>The zebrafish reference genome sequence and its relationship to the human genome.</title>
        <authorList>
            <person name="Howe K."/>
            <person name="Clark M.D."/>
            <person name="Torroja C.F."/>
            <person name="Torrance J."/>
            <person name="Berthelot C."/>
            <person name="Muffato M."/>
            <person name="Collins J.E."/>
            <person name="Humphray S."/>
            <person name="McLaren K."/>
            <person name="Matthews L."/>
            <person name="McLaren S."/>
            <person name="Sealy I."/>
            <person name="Caccamo M."/>
            <person name="Churcher C."/>
            <person name="Scott C."/>
            <person name="Barrett J.C."/>
            <person name="Koch R."/>
            <person name="Rauch G.J."/>
            <person name="White S."/>
            <person name="Chow W."/>
            <person name="Kilian B."/>
            <person name="Quintais L.T."/>
            <person name="Guerra-Assuncao J.A."/>
            <person name="Zhou Y."/>
            <person name="Gu Y."/>
            <person name="Yen J."/>
            <person name="Vogel J.H."/>
            <person name="Eyre T."/>
            <person name="Redmond S."/>
            <person name="Banerjee R."/>
            <person name="Chi J."/>
            <person name="Fu B."/>
            <person name="Langley E."/>
            <person name="Maguire S.F."/>
            <person name="Laird G.K."/>
            <person name="Lloyd D."/>
            <person name="Kenyon E."/>
            <person name="Donaldson S."/>
            <person name="Sehra H."/>
            <person name="Almeida-King J."/>
            <person name="Loveland J."/>
            <person name="Trevanion S."/>
            <person name="Jones M."/>
            <person name="Quail M."/>
            <person name="Willey D."/>
            <person name="Hunt A."/>
            <person name="Burton J."/>
            <person name="Sims S."/>
            <person name="McLay K."/>
            <person name="Plumb B."/>
            <person name="Davis J."/>
            <person name="Clee C."/>
            <person name="Oliver K."/>
            <person name="Clark R."/>
            <person name="Riddle C."/>
            <person name="Elliot D."/>
            <person name="Threadgold G."/>
            <person name="Harden G."/>
            <person name="Ware D."/>
            <person name="Begum S."/>
            <person name="Mortimore B."/>
            <person name="Kerry G."/>
            <person name="Heath P."/>
            <person name="Phillimore B."/>
            <person name="Tracey A."/>
            <person name="Corby N."/>
            <person name="Dunn M."/>
            <person name="Johnson C."/>
            <person name="Wood J."/>
            <person name="Clark S."/>
            <person name="Pelan S."/>
            <person name="Griffiths G."/>
            <person name="Smith M."/>
            <person name="Glithero R."/>
            <person name="Howden P."/>
            <person name="Barker N."/>
            <person name="Lloyd C."/>
            <person name="Stevens C."/>
            <person name="Harley J."/>
            <person name="Holt K."/>
            <person name="Panagiotidis G."/>
            <person name="Lovell J."/>
            <person name="Beasley H."/>
            <person name="Henderson C."/>
            <person name="Gordon D."/>
            <person name="Auger K."/>
            <person name="Wright D."/>
            <person name="Collins J."/>
            <person name="Raisen C."/>
            <person name="Dyer L."/>
            <person name="Leung K."/>
            <person name="Robertson L."/>
            <person name="Ambridge K."/>
            <person name="Leongamornlert D."/>
            <person name="McGuire S."/>
            <person name="Gilderthorp R."/>
            <person name="Griffiths C."/>
            <person name="Manthravadi D."/>
            <person name="Nichol S."/>
            <person name="Barker G."/>
            <person name="Whitehead S."/>
            <person name="Kay M."/>
            <person name="Brown J."/>
            <person name="Murnane C."/>
            <person name="Gray E."/>
            <person name="Humphries M."/>
            <person name="Sycamore N."/>
            <person name="Barker D."/>
            <person name="Saunders D."/>
            <person name="Wallis J."/>
            <person name="Babbage A."/>
            <person name="Hammond S."/>
            <person name="Mashreghi-Mohammadi M."/>
            <person name="Barr L."/>
            <person name="Martin S."/>
            <person name="Wray P."/>
            <person name="Ellington A."/>
            <person name="Matthews N."/>
            <person name="Ellwood M."/>
            <person name="Woodmansey R."/>
            <person name="Clark G."/>
            <person name="Cooper J."/>
            <person name="Tromans A."/>
            <person name="Grafham D."/>
            <person name="Skuce C."/>
            <person name="Pandian R."/>
            <person name="Andrews R."/>
            <person name="Harrison E."/>
            <person name="Kimberley A."/>
            <person name="Garnett J."/>
            <person name="Fosker N."/>
            <person name="Hall R."/>
            <person name="Garner P."/>
            <person name="Kelly D."/>
            <person name="Bird C."/>
            <person name="Palmer S."/>
            <person name="Gehring I."/>
            <person name="Berger A."/>
            <person name="Dooley C.M."/>
            <person name="Ersan-Urun Z."/>
            <person name="Eser C."/>
            <person name="Geiger H."/>
            <person name="Geisler M."/>
            <person name="Karotki L."/>
            <person name="Kirn A."/>
            <person name="Konantz J."/>
            <person name="Konantz M."/>
            <person name="Oberlander M."/>
            <person name="Rudolph-Geiger S."/>
            <person name="Teucke M."/>
            <person name="Lanz C."/>
            <person name="Raddatz G."/>
            <person name="Osoegawa K."/>
            <person name="Zhu B."/>
            <person name="Rapp A."/>
            <person name="Widaa S."/>
            <person name="Langford C."/>
            <person name="Yang F."/>
            <person name="Schuster S.C."/>
            <person name="Carter N.P."/>
            <person name="Harrow J."/>
            <person name="Ning Z."/>
            <person name="Herrero J."/>
            <person name="Searle S.M."/>
            <person name="Enright A."/>
            <person name="Geisler R."/>
            <person name="Plasterk R.H."/>
            <person name="Lee C."/>
            <person name="Westerfield M."/>
            <person name="de Jong P.J."/>
            <person name="Zon L.I."/>
            <person name="Postlethwait J.H."/>
            <person name="Nusslein-Volhard C."/>
            <person name="Hubbard T.J."/>
            <person name="Roest Crollius H."/>
            <person name="Rogers J."/>
            <person name="Stemple D.L."/>
        </authorList>
    </citation>
    <scope>NUCLEOTIDE SEQUENCE [LARGE SCALE GENOMIC DNA]</scope>
    <source>
        <strain>Tuebingen</strain>
    </source>
</reference>
<reference key="2">
    <citation type="submission" date="2005-04" db="EMBL/GenBank/DDBJ databases">
        <authorList>
            <consortium name="NIH - Zebrafish Gene Collection (ZGC) project"/>
        </authorList>
    </citation>
    <scope>NUCLEOTIDE SEQUENCE [LARGE SCALE MRNA]</scope>
    <source>
        <tissue>Olfactory epithelium</tissue>
    </source>
</reference>
<reference key="3">
    <citation type="journal article" date="2010" name="Cell">
        <title>A mammalian siderophore synthesized by an enzyme with a bacterial homolog involved in enterobactin production.</title>
        <authorList>
            <person name="Devireddy L.R."/>
            <person name="Hart D.O."/>
            <person name="Goetz D.H."/>
            <person name="Green M.R."/>
        </authorList>
    </citation>
    <scope>FUNCTION</scope>
    <scope>DISRUPTION PHENOTYPE</scope>
    <scope>DEVELOPMENTAL STAGE</scope>
</reference>
<organism>
    <name type="scientific">Danio rerio</name>
    <name type="common">Zebrafish</name>
    <name type="synonym">Brachydanio rerio</name>
    <dbReference type="NCBI Taxonomy" id="7955"/>
    <lineage>
        <taxon>Eukaryota</taxon>
        <taxon>Metazoa</taxon>
        <taxon>Chordata</taxon>
        <taxon>Craniata</taxon>
        <taxon>Vertebrata</taxon>
        <taxon>Euteleostomi</taxon>
        <taxon>Actinopterygii</taxon>
        <taxon>Neopterygii</taxon>
        <taxon>Teleostei</taxon>
        <taxon>Ostariophysi</taxon>
        <taxon>Cypriniformes</taxon>
        <taxon>Danionidae</taxon>
        <taxon>Danioninae</taxon>
        <taxon>Danio</taxon>
    </lineage>
</organism>
<protein>
    <recommendedName>
        <fullName>Dehydrogenase/reductase SDR family member 6</fullName>
        <ecNumber evidence="7">1.1.1.-</ecNumber>
    </recommendedName>
    <alternativeName>
        <fullName>(R)-beta-hydroxybutyrate dehydrogenase</fullName>
    </alternativeName>
    <alternativeName>
        <fullName>3-hydroxybutyrate dehydrogenase type 2</fullName>
        <ecNumber evidence="4">1.1.1.30</ecNumber>
    </alternativeName>
    <alternativeName>
        <fullName>4-oxo-L-proline reductase</fullName>
        <ecNumber evidence="2 4">1.1.1.104</ecNumber>
    </alternativeName>
    <alternativeName>
        <fullName>Oxidoreductase UCPA</fullName>
    </alternativeName>
    <alternativeName>
        <fullName>Short chain dehydrogenase/reductase family 15C member 1</fullName>
    </alternativeName>
</protein>